<reference key="1">
    <citation type="journal article" date="2001" name="Proc. Natl. Acad. Sci. U.S.A.">
        <title>Complete genome sequence of an M1 strain of Streptococcus pyogenes.</title>
        <authorList>
            <person name="Ferretti J.J."/>
            <person name="McShan W.M."/>
            <person name="Ajdic D.J."/>
            <person name="Savic D.J."/>
            <person name="Savic G."/>
            <person name="Lyon K."/>
            <person name="Primeaux C."/>
            <person name="Sezate S."/>
            <person name="Suvorov A.N."/>
            <person name="Kenton S."/>
            <person name="Lai H.S."/>
            <person name="Lin S.P."/>
            <person name="Qian Y."/>
            <person name="Jia H.G."/>
            <person name="Najar F.Z."/>
            <person name="Ren Q."/>
            <person name="Zhu H."/>
            <person name="Song L."/>
            <person name="White J."/>
            <person name="Yuan X."/>
            <person name="Clifton S.W."/>
            <person name="Roe B.A."/>
            <person name="McLaughlin R.E."/>
        </authorList>
    </citation>
    <scope>NUCLEOTIDE SEQUENCE [LARGE SCALE GENOMIC DNA]</scope>
    <source>
        <strain>ATCC 700294 / SF370 / Serotype M1</strain>
    </source>
</reference>
<reference key="2">
    <citation type="journal article" date="2005" name="J. Infect. Dis.">
        <title>Evolutionary origin and emergence of a highly successful clone of serotype M1 group A Streptococcus involved multiple horizontal gene transfer events.</title>
        <authorList>
            <person name="Sumby P."/>
            <person name="Porcella S.F."/>
            <person name="Madrigal A.G."/>
            <person name="Barbian K.D."/>
            <person name="Virtaneva K."/>
            <person name="Ricklefs S.M."/>
            <person name="Sturdevant D.E."/>
            <person name="Graham M.R."/>
            <person name="Vuopio-Varkila J."/>
            <person name="Hoe N.P."/>
            <person name="Musser J.M."/>
        </authorList>
    </citation>
    <scope>NUCLEOTIDE SEQUENCE [LARGE SCALE GENOMIC DNA]</scope>
    <source>
        <strain>ATCC BAA-947 / MGAS5005 / Serotype M1</strain>
    </source>
</reference>
<comment type="function">
    <text evidence="1">Catalyzes the transfer of a ribosyl phosphate group from 5-phosphoribose 1-diphosphate to orotate, leading to the formation of orotidine monophosphate (OMP).</text>
</comment>
<comment type="catalytic activity">
    <reaction evidence="1">
        <text>orotidine 5'-phosphate + diphosphate = orotate + 5-phospho-alpha-D-ribose 1-diphosphate</text>
        <dbReference type="Rhea" id="RHEA:10380"/>
        <dbReference type="ChEBI" id="CHEBI:30839"/>
        <dbReference type="ChEBI" id="CHEBI:33019"/>
        <dbReference type="ChEBI" id="CHEBI:57538"/>
        <dbReference type="ChEBI" id="CHEBI:58017"/>
        <dbReference type="EC" id="2.4.2.10"/>
    </reaction>
</comment>
<comment type="cofactor">
    <cofactor evidence="1">
        <name>Mg(2+)</name>
        <dbReference type="ChEBI" id="CHEBI:18420"/>
    </cofactor>
</comment>
<comment type="pathway">
    <text evidence="1">Pyrimidine metabolism; UMP biosynthesis via de novo pathway; UMP from orotate: step 1/2.</text>
</comment>
<comment type="subunit">
    <text evidence="1">Homodimer.</text>
</comment>
<comment type="similarity">
    <text evidence="1">Belongs to the purine/pyrimidine phosphoribosyltransferase family. PyrE subfamily.</text>
</comment>
<keyword id="KW-0002">3D-structure</keyword>
<keyword id="KW-0328">Glycosyltransferase</keyword>
<keyword id="KW-0460">Magnesium</keyword>
<keyword id="KW-0665">Pyrimidine biosynthesis</keyword>
<keyword id="KW-1185">Reference proteome</keyword>
<keyword id="KW-0808">Transferase</keyword>
<dbReference type="EC" id="2.4.2.10" evidence="1"/>
<dbReference type="EMBL" id="AE004092">
    <property type="protein sequence ID" value="AAK33818.1"/>
    <property type="molecule type" value="Genomic_DNA"/>
</dbReference>
<dbReference type="EMBL" id="CP000017">
    <property type="protein sequence ID" value="AAZ51322.1"/>
    <property type="molecule type" value="Genomic_DNA"/>
</dbReference>
<dbReference type="RefSeq" id="NP_269097.1">
    <property type="nucleotide sequence ID" value="NC_002737.2"/>
</dbReference>
<dbReference type="PDB" id="2AEE">
    <property type="method" value="X-ray"/>
    <property type="resolution" value="1.95 A"/>
    <property type="chains" value="A/B=1-209"/>
</dbReference>
<dbReference type="PDBsum" id="2AEE"/>
<dbReference type="SMR" id="Q9A076"/>
<dbReference type="PaxDb" id="1314-HKU360_00714"/>
<dbReference type="KEGG" id="spy:SPy_0901"/>
<dbReference type="KEGG" id="spz:M5005_Spy0704"/>
<dbReference type="PATRIC" id="fig|160490.10.peg.774"/>
<dbReference type="HOGENOM" id="CLU_074878_1_1_9"/>
<dbReference type="OMA" id="ENPFTWA"/>
<dbReference type="UniPathway" id="UPA00070">
    <property type="reaction ID" value="UER00119"/>
</dbReference>
<dbReference type="EvolutionaryTrace" id="Q9A076"/>
<dbReference type="Proteomes" id="UP000000750">
    <property type="component" value="Chromosome"/>
</dbReference>
<dbReference type="GO" id="GO:0000287">
    <property type="term" value="F:magnesium ion binding"/>
    <property type="evidence" value="ECO:0007669"/>
    <property type="project" value="UniProtKB-UniRule"/>
</dbReference>
<dbReference type="GO" id="GO:0004588">
    <property type="term" value="F:orotate phosphoribosyltransferase activity"/>
    <property type="evidence" value="ECO:0007669"/>
    <property type="project" value="UniProtKB-UniRule"/>
</dbReference>
<dbReference type="GO" id="GO:0044205">
    <property type="term" value="P:'de novo' UMP biosynthetic process"/>
    <property type="evidence" value="ECO:0007669"/>
    <property type="project" value="UniProtKB-UniRule"/>
</dbReference>
<dbReference type="GO" id="GO:0019856">
    <property type="term" value="P:pyrimidine nucleobase biosynthetic process"/>
    <property type="evidence" value="ECO:0007669"/>
    <property type="project" value="TreeGrafter"/>
</dbReference>
<dbReference type="CDD" id="cd06223">
    <property type="entry name" value="PRTases_typeI"/>
    <property type="match status" value="1"/>
</dbReference>
<dbReference type="Gene3D" id="3.40.50.2020">
    <property type="match status" value="1"/>
</dbReference>
<dbReference type="HAMAP" id="MF_01208">
    <property type="entry name" value="PyrE"/>
    <property type="match status" value="1"/>
</dbReference>
<dbReference type="InterPro" id="IPR023031">
    <property type="entry name" value="OPRT"/>
</dbReference>
<dbReference type="InterPro" id="IPR004467">
    <property type="entry name" value="Or_phspho_trans_dom"/>
</dbReference>
<dbReference type="InterPro" id="IPR000836">
    <property type="entry name" value="PRibTrfase_dom"/>
</dbReference>
<dbReference type="InterPro" id="IPR029057">
    <property type="entry name" value="PRTase-like"/>
</dbReference>
<dbReference type="NCBIfam" id="TIGR00336">
    <property type="entry name" value="pyrE"/>
    <property type="match status" value="1"/>
</dbReference>
<dbReference type="PANTHER" id="PTHR19278">
    <property type="entry name" value="OROTATE PHOSPHORIBOSYLTRANSFERASE"/>
    <property type="match status" value="1"/>
</dbReference>
<dbReference type="PANTHER" id="PTHR19278:SF9">
    <property type="entry name" value="URIDINE 5'-MONOPHOSPHATE SYNTHASE"/>
    <property type="match status" value="1"/>
</dbReference>
<dbReference type="Pfam" id="PF00156">
    <property type="entry name" value="Pribosyltran"/>
    <property type="match status" value="1"/>
</dbReference>
<dbReference type="SUPFAM" id="SSF53271">
    <property type="entry name" value="PRTase-like"/>
    <property type="match status" value="1"/>
</dbReference>
<dbReference type="PROSITE" id="PS00103">
    <property type="entry name" value="PUR_PYR_PR_TRANSFER"/>
    <property type="match status" value="1"/>
</dbReference>
<protein>
    <recommendedName>
        <fullName evidence="1">Orotate phosphoribosyltransferase</fullName>
        <shortName evidence="1">OPRT</shortName>
        <shortName evidence="1">OPRTase</shortName>
        <ecNumber evidence="1">2.4.2.10</ecNumber>
    </recommendedName>
</protein>
<feature type="chain" id="PRO_0000110753" description="Orotate phosphoribosyltransferase">
    <location>
        <begin position="1"/>
        <end position="209"/>
    </location>
</feature>
<feature type="binding site" evidence="1">
    <location>
        <position position="96"/>
    </location>
    <ligand>
        <name>5-phospho-alpha-D-ribose 1-diphosphate</name>
        <dbReference type="ChEBI" id="CHEBI:58017"/>
        <note>ligand shared between dimeric partners</note>
    </ligand>
</feature>
<feature type="binding site" evidence="1">
    <location>
        <position position="100"/>
    </location>
    <ligand>
        <name>5-phospho-alpha-D-ribose 1-diphosphate</name>
        <dbReference type="ChEBI" id="CHEBI:58017"/>
        <note>ligand shared between dimeric partners</note>
    </ligand>
</feature>
<feature type="binding site" evidence="1">
    <location>
        <position position="102"/>
    </location>
    <ligand>
        <name>5-phospho-alpha-D-ribose 1-diphosphate</name>
        <dbReference type="ChEBI" id="CHEBI:58017"/>
        <note>ligand shared between dimeric partners</note>
    </ligand>
</feature>
<feature type="binding site" description="in other chain" evidence="1">
    <location>
        <begin position="122"/>
        <end position="130"/>
    </location>
    <ligand>
        <name>5-phospho-alpha-D-ribose 1-diphosphate</name>
        <dbReference type="ChEBI" id="CHEBI:58017"/>
        <note>ligand shared between dimeric partners</note>
    </ligand>
</feature>
<feature type="binding site" evidence="1">
    <location>
        <position position="126"/>
    </location>
    <ligand>
        <name>orotate</name>
        <dbReference type="ChEBI" id="CHEBI:30839"/>
    </ligand>
</feature>
<feature type="helix" evidence="2">
    <location>
        <begin position="3"/>
        <end position="13"/>
    </location>
</feature>
<feature type="strand" evidence="2">
    <location>
        <begin position="16"/>
        <end position="19"/>
    </location>
</feature>
<feature type="helix" evidence="2">
    <location>
        <begin position="28"/>
        <end position="30"/>
    </location>
</feature>
<feature type="strand" evidence="2">
    <location>
        <begin position="32"/>
        <end position="37"/>
    </location>
</feature>
<feature type="helix" evidence="2">
    <location>
        <begin position="39"/>
        <end position="44"/>
    </location>
</feature>
<feature type="helix" evidence="2">
    <location>
        <begin position="46"/>
        <end position="63"/>
    </location>
</feature>
<feature type="strand" evidence="2">
    <location>
        <begin position="69"/>
        <end position="73"/>
    </location>
</feature>
<feature type="turn" evidence="2">
    <location>
        <begin position="74"/>
        <end position="77"/>
    </location>
</feature>
<feature type="helix" evidence="2">
    <location>
        <begin position="78"/>
        <end position="88"/>
    </location>
</feature>
<feature type="strand" evidence="2">
    <location>
        <begin position="92"/>
        <end position="95"/>
    </location>
</feature>
<feature type="strand" evidence="2">
    <location>
        <begin position="107"/>
        <end position="110"/>
    </location>
</feature>
<feature type="strand" evidence="2">
    <location>
        <begin position="117"/>
        <end position="127"/>
    </location>
</feature>
<feature type="helix" evidence="2">
    <location>
        <begin position="129"/>
        <end position="140"/>
    </location>
</feature>
<feature type="strand" evidence="2">
    <location>
        <begin position="144"/>
        <end position="153"/>
    </location>
</feature>
<feature type="helix" evidence="2">
    <location>
        <begin position="157"/>
        <end position="166"/>
    </location>
</feature>
<feature type="strand" evidence="2">
    <location>
        <begin position="170"/>
        <end position="173"/>
    </location>
</feature>
<feature type="helix" evidence="2">
    <location>
        <begin position="176"/>
        <end position="185"/>
    </location>
</feature>
<feature type="helix" evidence="2">
    <location>
        <begin position="191"/>
        <end position="202"/>
    </location>
</feature>
<feature type="turn" evidence="2">
    <location>
        <begin position="204"/>
        <end position="206"/>
    </location>
</feature>
<name>PYRE_STRP1</name>
<gene>
    <name evidence="1" type="primary">pyrE</name>
    <name type="ordered locus">SPy_0901</name>
    <name type="ordered locus">M5005_Spy0704</name>
</gene>
<accession>Q9A076</accession>
<accession>Q48Z96</accession>
<sequence>MTLASQIATQLLDIKAVYLKPEDPFTWASGIKSPIYTDNRVTLSYPKTRDLIENGFVETIKAHFPEVEVIAGTATAGIPHGAIIADKMTLPFAYIRSKPKDHGAGNQIEGRVLKGQKMVIIEDLISTGGSVLDAAAAASREGADVLGVVAIFTYELPKASQNFKEAGIKLITLSNYTELIAVAKLQGYITNDGLHLLKKFKEDQVNWQQ</sequence>
<organism>
    <name type="scientific">Streptococcus pyogenes serotype M1</name>
    <dbReference type="NCBI Taxonomy" id="301447"/>
    <lineage>
        <taxon>Bacteria</taxon>
        <taxon>Bacillati</taxon>
        <taxon>Bacillota</taxon>
        <taxon>Bacilli</taxon>
        <taxon>Lactobacillales</taxon>
        <taxon>Streptococcaceae</taxon>
        <taxon>Streptococcus</taxon>
    </lineage>
</organism>
<proteinExistence type="evidence at protein level"/>
<evidence type="ECO:0000255" key="1">
    <source>
        <dbReference type="HAMAP-Rule" id="MF_01208"/>
    </source>
</evidence>
<evidence type="ECO:0007829" key="2">
    <source>
        <dbReference type="PDB" id="2AEE"/>
    </source>
</evidence>